<evidence type="ECO:0000255" key="1">
    <source>
        <dbReference type="HAMAP-Rule" id="MF_01347"/>
    </source>
</evidence>
<protein>
    <recommendedName>
        <fullName evidence="1">ATP synthase subunit beta</fullName>
        <ecNumber evidence="1">7.1.2.2</ecNumber>
    </recommendedName>
    <alternativeName>
        <fullName evidence="1">ATP synthase F1 sector subunit beta</fullName>
    </alternativeName>
    <alternativeName>
        <fullName evidence="1">F-ATPase subunit beta</fullName>
    </alternativeName>
</protein>
<comment type="function">
    <text evidence="1">Produces ATP from ADP in the presence of a proton gradient across the membrane. The catalytic sites are hosted primarily by the beta subunits.</text>
</comment>
<comment type="catalytic activity">
    <reaction evidence="1">
        <text>ATP + H2O + 4 H(+)(in) = ADP + phosphate + 5 H(+)(out)</text>
        <dbReference type="Rhea" id="RHEA:57720"/>
        <dbReference type="ChEBI" id="CHEBI:15377"/>
        <dbReference type="ChEBI" id="CHEBI:15378"/>
        <dbReference type="ChEBI" id="CHEBI:30616"/>
        <dbReference type="ChEBI" id="CHEBI:43474"/>
        <dbReference type="ChEBI" id="CHEBI:456216"/>
        <dbReference type="EC" id="7.1.2.2"/>
    </reaction>
</comment>
<comment type="subunit">
    <text evidence="1">F-type ATPases have 2 components, CF(1) - the catalytic core - and CF(0) - the membrane proton channel. CF(1) has five subunits: alpha(3), beta(3), gamma(1), delta(1), epsilon(1). CF(0) has three main subunits: a(1), b(2) and c(9-12). The alpha and beta chains form an alternating ring which encloses part of the gamma chain. CF(1) is attached to CF(0) by a central stalk formed by the gamma and epsilon chains, while a peripheral stalk is formed by the delta and b chains.</text>
</comment>
<comment type="subcellular location">
    <subcellularLocation>
        <location evidence="1">Cell inner membrane</location>
        <topology evidence="1">Peripheral membrane protein</topology>
    </subcellularLocation>
</comment>
<comment type="similarity">
    <text evidence="1">Belongs to the ATPase alpha/beta chains family.</text>
</comment>
<accession>Q1RKD7</accession>
<feature type="chain" id="PRO_0000254362" description="ATP synthase subunit beta">
    <location>
        <begin position="1"/>
        <end position="473"/>
    </location>
</feature>
<feature type="binding site" evidence="1">
    <location>
        <begin position="153"/>
        <end position="160"/>
    </location>
    <ligand>
        <name>ATP</name>
        <dbReference type="ChEBI" id="CHEBI:30616"/>
    </ligand>
</feature>
<name>ATPB_RICBR</name>
<proteinExistence type="inferred from homology"/>
<organism>
    <name type="scientific">Rickettsia bellii (strain RML369-C)</name>
    <dbReference type="NCBI Taxonomy" id="336407"/>
    <lineage>
        <taxon>Bacteria</taxon>
        <taxon>Pseudomonadati</taxon>
        <taxon>Pseudomonadota</taxon>
        <taxon>Alphaproteobacteria</taxon>
        <taxon>Rickettsiales</taxon>
        <taxon>Rickettsiaceae</taxon>
        <taxon>Rickettsieae</taxon>
        <taxon>Rickettsia</taxon>
        <taxon>belli group</taxon>
    </lineage>
</organism>
<dbReference type="EC" id="7.1.2.2" evidence="1"/>
<dbReference type="EMBL" id="CP000087">
    <property type="protein sequence ID" value="ABE04177.1"/>
    <property type="molecule type" value="Genomic_DNA"/>
</dbReference>
<dbReference type="RefSeq" id="WP_011476792.1">
    <property type="nucleotide sequence ID" value="NC_007940.1"/>
</dbReference>
<dbReference type="SMR" id="Q1RKD7"/>
<dbReference type="KEGG" id="rbe:RBE_0096"/>
<dbReference type="eggNOG" id="COG0055">
    <property type="taxonomic scope" value="Bacteria"/>
</dbReference>
<dbReference type="HOGENOM" id="CLU_022398_0_2_5"/>
<dbReference type="OrthoDB" id="9801639at2"/>
<dbReference type="Proteomes" id="UP000001951">
    <property type="component" value="Chromosome"/>
</dbReference>
<dbReference type="GO" id="GO:0005886">
    <property type="term" value="C:plasma membrane"/>
    <property type="evidence" value="ECO:0007669"/>
    <property type="project" value="UniProtKB-SubCell"/>
</dbReference>
<dbReference type="GO" id="GO:0045259">
    <property type="term" value="C:proton-transporting ATP synthase complex"/>
    <property type="evidence" value="ECO:0007669"/>
    <property type="project" value="UniProtKB-KW"/>
</dbReference>
<dbReference type="GO" id="GO:0005524">
    <property type="term" value="F:ATP binding"/>
    <property type="evidence" value="ECO:0007669"/>
    <property type="project" value="UniProtKB-UniRule"/>
</dbReference>
<dbReference type="GO" id="GO:0016887">
    <property type="term" value="F:ATP hydrolysis activity"/>
    <property type="evidence" value="ECO:0007669"/>
    <property type="project" value="InterPro"/>
</dbReference>
<dbReference type="GO" id="GO:0046933">
    <property type="term" value="F:proton-transporting ATP synthase activity, rotational mechanism"/>
    <property type="evidence" value="ECO:0007669"/>
    <property type="project" value="UniProtKB-UniRule"/>
</dbReference>
<dbReference type="CDD" id="cd18110">
    <property type="entry name" value="ATP-synt_F1_beta_C"/>
    <property type="match status" value="1"/>
</dbReference>
<dbReference type="CDD" id="cd18115">
    <property type="entry name" value="ATP-synt_F1_beta_N"/>
    <property type="match status" value="1"/>
</dbReference>
<dbReference type="CDD" id="cd01133">
    <property type="entry name" value="F1-ATPase_beta_CD"/>
    <property type="match status" value="1"/>
</dbReference>
<dbReference type="FunFam" id="1.10.1140.10:FF:000001">
    <property type="entry name" value="ATP synthase subunit beta"/>
    <property type="match status" value="1"/>
</dbReference>
<dbReference type="FunFam" id="2.40.10.170:FF:000014">
    <property type="entry name" value="ATP synthase subunit beta"/>
    <property type="match status" value="1"/>
</dbReference>
<dbReference type="FunFam" id="3.40.50.300:FF:000026">
    <property type="entry name" value="ATP synthase subunit beta"/>
    <property type="match status" value="1"/>
</dbReference>
<dbReference type="Gene3D" id="2.40.10.170">
    <property type="match status" value="1"/>
</dbReference>
<dbReference type="Gene3D" id="1.10.1140.10">
    <property type="entry name" value="Bovine Mitochondrial F1-atpase, Atp Synthase Beta Chain, Chain D, domain 3"/>
    <property type="match status" value="1"/>
</dbReference>
<dbReference type="Gene3D" id="3.40.50.300">
    <property type="entry name" value="P-loop containing nucleotide triphosphate hydrolases"/>
    <property type="match status" value="1"/>
</dbReference>
<dbReference type="HAMAP" id="MF_01347">
    <property type="entry name" value="ATP_synth_beta_bact"/>
    <property type="match status" value="1"/>
</dbReference>
<dbReference type="InterPro" id="IPR003593">
    <property type="entry name" value="AAA+_ATPase"/>
</dbReference>
<dbReference type="InterPro" id="IPR055190">
    <property type="entry name" value="ATP-synt_VA_C"/>
</dbReference>
<dbReference type="InterPro" id="IPR005722">
    <property type="entry name" value="ATP_synth_F1_bsu"/>
</dbReference>
<dbReference type="InterPro" id="IPR020003">
    <property type="entry name" value="ATPase_a/bsu_AS"/>
</dbReference>
<dbReference type="InterPro" id="IPR050053">
    <property type="entry name" value="ATPase_alpha/beta_chains"/>
</dbReference>
<dbReference type="InterPro" id="IPR004100">
    <property type="entry name" value="ATPase_F1/V1/A1_a/bsu_N"/>
</dbReference>
<dbReference type="InterPro" id="IPR036121">
    <property type="entry name" value="ATPase_F1/V1/A1_a/bsu_N_sf"/>
</dbReference>
<dbReference type="InterPro" id="IPR000194">
    <property type="entry name" value="ATPase_F1/V1/A1_a/bsu_nucl-bd"/>
</dbReference>
<dbReference type="InterPro" id="IPR024034">
    <property type="entry name" value="ATPase_F1/V1_b/a_C"/>
</dbReference>
<dbReference type="InterPro" id="IPR027417">
    <property type="entry name" value="P-loop_NTPase"/>
</dbReference>
<dbReference type="NCBIfam" id="TIGR01039">
    <property type="entry name" value="atpD"/>
    <property type="match status" value="1"/>
</dbReference>
<dbReference type="PANTHER" id="PTHR15184">
    <property type="entry name" value="ATP SYNTHASE"/>
    <property type="match status" value="1"/>
</dbReference>
<dbReference type="PANTHER" id="PTHR15184:SF71">
    <property type="entry name" value="ATP SYNTHASE SUBUNIT BETA, MITOCHONDRIAL"/>
    <property type="match status" value="1"/>
</dbReference>
<dbReference type="Pfam" id="PF00006">
    <property type="entry name" value="ATP-synt_ab"/>
    <property type="match status" value="1"/>
</dbReference>
<dbReference type="Pfam" id="PF02874">
    <property type="entry name" value="ATP-synt_ab_N"/>
    <property type="match status" value="1"/>
</dbReference>
<dbReference type="Pfam" id="PF22919">
    <property type="entry name" value="ATP-synt_VA_C"/>
    <property type="match status" value="1"/>
</dbReference>
<dbReference type="PIRSF" id="PIRSF039072">
    <property type="entry name" value="ATPase_subunit_beta"/>
    <property type="match status" value="1"/>
</dbReference>
<dbReference type="SMART" id="SM00382">
    <property type="entry name" value="AAA"/>
    <property type="match status" value="1"/>
</dbReference>
<dbReference type="SUPFAM" id="SSF47917">
    <property type="entry name" value="C-terminal domain of alpha and beta subunits of F1 ATP synthase"/>
    <property type="match status" value="1"/>
</dbReference>
<dbReference type="SUPFAM" id="SSF50615">
    <property type="entry name" value="N-terminal domain of alpha and beta subunits of F1 ATP synthase"/>
    <property type="match status" value="1"/>
</dbReference>
<dbReference type="SUPFAM" id="SSF52540">
    <property type="entry name" value="P-loop containing nucleoside triphosphate hydrolases"/>
    <property type="match status" value="1"/>
</dbReference>
<dbReference type="PROSITE" id="PS00152">
    <property type="entry name" value="ATPASE_ALPHA_BETA"/>
    <property type="match status" value="1"/>
</dbReference>
<keyword id="KW-0066">ATP synthesis</keyword>
<keyword id="KW-0067">ATP-binding</keyword>
<keyword id="KW-0997">Cell inner membrane</keyword>
<keyword id="KW-1003">Cell membrane</keyword>
<keyword id="KW-0139">CF(1)</keyword>
<keyword id="KW-0375">Hydrogen ion transport</keyword>
<keyword id="KW-0406">Ion transport</keyword>
<keyword id="KW-0472">Membrane</keyword>
<keyword id="KW-0547">Nucleotide-binding</keyword>
<keyword id="KW-1278">Translocase</keyword>
<keyword id="KW-0813">Transport</keyword>
<sequence>MKKNIGKITQIISAVVDVKFTNKGKLPQILNALECYNDKQRIVLEIAQHIGDDTVRCIAMNSTEGLVRGMEVVDTGSPISIPVGIETLGRIMNVVGEPIDGKGKIKGSSISSIYKSAPSFTQQSTDRNILVTGIKVVDLLAPYTKGGKIGLFGGAGVGKTVLIMELINNVAKAHGGYTVFAGVGERTREGNDLYHEMIDSGVINLEEPEKSKVALVYGQMNEPPGARARVALTGLTVAESFRDMNEGQDVLFFVDNIFRFTQAGSEVSALLGRIPSAVGYQPTLATDMGELQERITSTKHGSITSVQAIYVPADDLTDPAPATSFAHLDATTVLSRQIAELGIYPAVDPLDSTSQVLDPMIVGEEHYNVARKVQQILQTYKSLQDIIAILGMDELSEEDKLTVSRARKIQRFLSQPFHVAEVFTGAEGKFVNLADTIAGFKGLTEGKYDDLPEAAFYMVGTIEEALEKAKTLK</sequence>
<gene>
    <name evidence="1" type="primary">atpD</name>
    <name type="ordered locus">RBE_0096</name>
</gene>
<reference key="1">
    <citation type="journal article" date="2006" name="PLoS Genet.">
        <title>Genome sequence of Rickettsia bellii illuminates the role of amoebae in gene exchanges between intracellular pathogens.</title>
        <authorList>
            <person name="Ogata H."/>
            <person name="La Scola B."/>
            <person name="Audic S."/>
            <person name="Renesto P."/>
            <person name="Blanc G."/>
            <person name="Robert C."/>
            <person name="Fournier P.-E."/>
            <person name="Claverie J.-M."/>
            <person name="Raoult D."/>
        </authorList>
    </citation>
    <scope>NUCLEOTIDE SEQUENCE [LARGE SCALE GENOMIC DNA]</scope>
    <source>
        <strain>RML369-C</strain>
    </source>
</reference>